<comment type="function">
    <text evidence="1">Catalyzes the facilitated diffusion of 2-acyl-glycero-3-phosphoethanolamine (2-acyl-GPE) into the cell.</text>
</comment>
<comment type="subcellular location">
    <subcellularLocation>
        <location evidence="1">Cell inner membrane</location>
        <topology evidence="1">Multi-pass membrane protein</topology>
    </subcellularLocation>
</comment>
<comment type="similarity">
    <text evidence="1">Belongs to the major facilitator superfamily. LplT (TC 2.A.1.42) family.</text>
</comment>
<organism>
    <name type="scientific">Shigella sonnei (strain Ss046)</name>
    <dbReference type="NCBI Taxonomy" id="300269"/>
    <lineage>
        <taxon>Bacteria</taxon>
        <taxon>Pseudomonadati</taxon>
        <taxon>Pseudomonadota</taxon>
        <taxon>Gammaproteobacteria</taxon>
        <taxon>Enterobacterales</taxon>
        <taxon>Enterobacteriaceae</taxon>
        <taxon>Shigella</taxon>
    </lineage>
</organism>
<keyword id="KW-0997">Cell inner membrane</keyword>
<keyword id="KW-1003">Cell membrane</keyword>
<keyword id="KW-0445">Lipid transport</keyword>
<keyword id="KW-0472">Membrane</keyword>
<keyword id="KW-1185">Reference proteome</keyword>
<keyword id="KW-0812">Transmembrane</keyword>
<keyword id="KW-1133">Transmembrane helix</keyword>
<keyword id="KW-0813">Transport</keyword>
<evidence type="ECO:0000255" key="1">
    <source>
        <dbReference type="HAMAP-Rule" id="MF_01585"/>
    </source>
</evidence>
<protein>
    <recommendedName>
        <fullName evidence="1">Lysophospholipid transporter LplT</fullName>
    </recommendedName>
</protein>
<feature type="chain" id="PRO_0000309838" description="Lysophospholipid transporter LplT">
    <location>
        <begin position="1"/>
        <end position="397"/>
    </location>
</feature>
<feature type="topological domain" description="Periplasmic" evidence="1">
    <location>
        <begin position="1"/>
        <end position="17"/>
    </location>
</feature>
<feature type="transmembrane region" description="Helical" evidence="1">
    <location>
        <begin position="18"/>
        <end position="38"/>
    </location>
</feature>
<feature type="topological domain" description="Cytoplasmic" evidence="1">
    <location>
        <begin position="39"/>
        <end position="52"/>
    </location>
</feature>
<feature type="transmembrane region" description="Helical" evidence="1">
    <location>
        <begin position="53"/>
        <end position="73"/>
    </location>
</feature>
<feature type="topological domain" description="Periplasmic" evidence="1">
    <location>
        <begin position="74"/>
        <end position="90"/>
    </location>
</feature>
<feature type="transmembrane region" description="Helical" evidence="1">
    <location>
        <begin position="91"/>
        <end position="111"/>
    </location>
</feature>
<feature type="topological domain" description="Cytoplasmic" evidence="1">
    <location>
        <begin position="112"/>
        <end position="144"/>
    </location>
</feature>
<feature type="transmembrane region" description="Helical" evidence="1">
    <location>
        <begin position="145"/>
        <end position="165"/>
    </location>
</feature>
<feature type="topological domain" description="Periplasmic" evidence="1">
    <location>
        <position position="166"/>
    </location>
</feature>
<feature type="transmembrane region" description="Helical" evidence="1">
    <location>
        <begin position="167"/>
        <end position="187"/>
    </location>
</feature>
<feature type="topological domain" description="Cytoplasmic" evidence="1">
    <location>
        <begin position="188"/>
        <end position="226"/>
    </location>
</feature>
<feature type="transmembrane region" description="Helical" evidence="1">
    <location>
        <begin position="227"/>
        <end position="247"/>
    </location>
</feature>
<feature type="topological domain" description="Periplasmic" evidence="1">
    <location>
        <begin position="248"/>
        <end position="256"/>
    </location>
</feature>
<feature type="transmembrane region" description="Helical" evidence="1">
    <location>
        <begin position="257"/>
        <end position="277"/>
    </location>
</feature>
<feature type="topological domain" description="Cytoplasmic" evidence="1">
    <location>
        <begin position="278"/>
        <end position="280"/>
    </location>
</feature>
<feature type="transmembrane region" description="Helical" evidence="1">
    <location>
        <begin position="281"/>
        <end position="301"/>
    </location>
</feature>
<feature type="topological domain" description="Periplasmic" evidence="1">
    <location>
        <begin position="302"/>
        <end position="304"/>
    </location>
</feature>
<feature type="transmembrane region" description="Helical" evidence="1">
    <location>
        <begin position="305"/>
        <end position="325"/>
    </location>
</feature>
<feature type="topological domain" description="Cytoplasmic" evidence="1">
    <location>
        <begin position="326"/>
        <end position="343"/>
    </location>
</feature>
<feature type="transmembrane region" description="Helical" evidence="1">
    <location>
        <begin position="344"/>
        <end position="364"/>
    </location>
</feature>
<feature type="topological domain" description="Periplasmic" evidence="1">
    <location>
        <begin position="365"/>
        <end position="366"/>
    </location>
</feature>
<feature type="transmembrane region" description="Helical" evidence="1">
    <location>
        <begin position="367"/>
        <end position="387"/>
    </location>
</feature>
<feature type="topological domain" description="Cytoplasmic" evidence="1">
    <location>
        <begin position="388"/>
        <end position="397"/>
    </location>
</feature>
<gene>
    <name evidence="1" type="primary">lplT</name>
    <name type="ordered locus">SSON_2995</name>
</gene>
<proteinExistence type="inferred from homology"/>
<accession>Q3YY22</accession>
<dbReference type="EMBL" id="CP000038">
    <property type="protein sequence ID" value="AAZ89590.1"/>
    <property type="molecule type" value="Genomic_DNA"/>
</dbReference>
<dbReference type="RefSeq" id="WP_000004608.1">
    <property type="nucleotide sequence ID" value="NC_007384.1"/>
</dbReference>
<dbReference type="SMR" id="Q3YY22"/>
<dbReference type="KEGG" id="ssn:SSON_2995"/>
<dbReference type="HOGENOM" id="CLU_047399_0_0_6"/>
<dbReference type="Proteomes" id="UP000002529">
    <property type="component" value="Chromosome"/>
</dbReference>
<dbReference type="GO" id="GO:0005886">
    <property type="term" value="C:plasma membrane"/>
    <property type="evidence" value="ECO:0007669"/>
    <property type="project" value="UniProtKB-SubCell"/>
</dbReference>
<dbReference type="GO" id="GO:0051978">
    <property type="term" value="F:lysophospholipid:sodium symporter activity"/>
    <property type="evidence" value="ECO:0007669"/>
    <property type="project" value="InterPro"/>
</dbReference>
<dbReference type="CDD" id="cd06173">
    <property type="entry name" value="MFS_MefA_like"/>
    <property type="match status" value="1"/>
</dbReference>
<dbReference type="FunFam" id="1.20.1250.20:FF:000091">
    <property type="entry name" value="Lysophospholipid transporter LplT"/>
    <property type="match status" value="1"/>
</dbReference>
<dbReference type="Gene3D" id="1.20.1250.20">
    <property type="entry name" value="MFS general substrate transporter like domains"/>
    <property type="match status" value="1"/>
</dbReference>
<dbReference type="HAMAP" id="MF_01585">
    <property type="entry name" value="MFS_LplT"/>
    <property type="match status" value="1"/>
</dbReference>
<dbReference type="InterPro" id="IPR023727">
    <property type="entry name" value="LysoPLipid__transptr_LplT"/>
</dbReference>
<dbReference type="InterPro" id="IPR011701">
    <property type="entry name" value="MFS"/>
</dbReference>
<dbReference type="InterPro" id="IPR036259">
    <property type="entry name" value="MFS_trans_sf"/>
</dbReference>
<dbReference type="NCBIfam" id="NF008397">
    <property type="entry name" value="PRK11195.1"/>
    <property type="match status" value="1"/>
</dbReference>
<dbReference type="PANTHER" id="PTHR43266">
    <property type="entry name" value="MACROLIDE-EFFLUX PROTEIN"/>
    <property type="match status" value="1"/>
</dbReference>
<dbReference type="PANTHER" id="PTHR43266:SF2">
    <property type="entry name" value="MAJOR FACILITATOR SUPERFAMILY (MFS) PROFILE DOMAIN-CONTAINING PROTEIN"/>
    <property type="match status" value="1"/>
</dbReference>
<dbReference type="Pfam" id="PF07690">
    <property type="entry name" value="MFS_1"/>
    <property type="match status" value="1"/>
</dbReference>
<dbReference type="SUPFAM" id="SSF103473">
    <property type="entry name" value="MFS general substrate transporter"/>
    <property type="match status" value="1"/>
</dbReference>
<sequence length="397" mass="41674">MSESVHTNTSLWSKGMKAVIVAQFLSAFGDNALLFATLALLKAQFYPEWSQPILQMVFVGAYILFAPFVGQVADSFAKGRVMMFANGLKLLGAASICFGINPFLGYTLVGVGAAAYSPAKYGILGELTTGSKLVKANGLMEASTIAAILLGSVAGGVLADWHVLVALAACALAYGGAVVANIYIPKLAAARPGQSWNLINMTRSFLNACTSLWRNGETRFSLVGTSLFWGAGVTLRFLLVLWVPVALGITDNATPTYLNAMVAIGIVVGAGAAAKLVTLETMSRCMPAGILIGVVVLIFSLQHELLPAYALLMLIGVMGGFFVVPLNALLQERGKKSVGAGNAIAVQNLGENSAMLLMLGIYSLAVMVGIPVVPIGIGFGALFALAITALWIWQRRH</sequence>
<reference key="1">
    <citation type="journal article" date="2005" name="Nucleic Acids Res.">
        <title>Genome dynamics and diversity of Shigella species, the etiologic agents of bacillary dysentery.</title>
        <authorList>
            <person name="Yang F."/>
            <person name="Yang J."/>
            <person name="Zhang X."/>
            <person name="Chen L."/>
            <person name="Jiang Y."/>
            <person name="Yan Y."/>
            <person name="Tang X."/>
            <person name="Wang J."/>
            <person name="Xiong Z."/>
            <person name="Dong J."/>
            <person name="Xue Y."/>
            <person name="Zhu Y."/>
            <person name="Xu X."/>
            <person name="Sun L."/>
            <person name="Chen S."/>
            <person name="Nie H."/>
            <person name="Peng J."/>
            <person name="Xu J."/>
            <person name="Wang Y."/>
            <person name="Yuan Z."/>
            <person name="Wen Y."/>
            <person name="Yao Z."/>
            <person name="Shen Y."/>
            <person name="Qiang B."/>
            <person name="Hou Y."/>
            <person name="Yu J."/>
            <person name="Jin Q."/>
        </authorList>
    </citation>
    <scope>NUCLEOTIDE SEQUENCE [LARGE SCALE GENOMIC DNA]</scope>
    <source>
        <strain>Ss046</strain>
    </source>
</reference>
<name>LPLT_SHISS</name>